<protein>
    <recommendedName>
        <fullName evidence="3">Eukaryotic translation initiation factor 3 subunit D-1</fullName>
        <shortName evidence="3">eIF3d-1</shortName>
    </recommendedName>
    <alternativeName>
        <fullName evidence="3">Eukaryotic translation initiation factor 3 subunit 7-1</fullName>
    </alternativeName>
    <alternativeName>
        <fullName>Eukaryotic translation initiation factor 3 subunit p66</fullName>
    </alternativeName>
</protein>
<gene>
    <name evidence="3" type="primary">eIF3d1</name>
    <name type="synonym">eIF-3p66</name>
    <name type="ORF">GJ22782</name>
</gene>
<organism>
    <name type="scientific">Drosophila virilis</name>
    <name type="common">Fruit fly</name>
    <dbReference type="NCBI Taxonomy" id="7244"/>
    <lineage>
        <taxon>Eukaryota</taxon>
        <taxon>Metazoa</taxon>
        <taxon>Ecdysozoa</taxon>
        <taxon>Arthropoda</taxon>
        <taxon>Hexapoda</taxon>
        <taxon>Insecta</taxon>
        <taxon>Pterygota</taxon>
        <taxon>Neoptera</taxon>
        <taxon>Endopterygota</taxon>
        <taxon>Diptera</taxon>
        <taxon>Brachycera</taxon>
        <taxon>Muscomorpha</taxon>
        <taxon>Ephydroidea</taxon>
        <taxon>Drosophilidae</taxon>
        <taxon>Drosophila</taxon>
    </lineage>
</organism>
<evidence type="ECO:0000250" key="1"/>
<evidence type="ECO:0000250" key="2">
    <source>
        <dbReference type="UniProtKB" id="K7IM66"/>
    </source>
</evidence>
<evidence type="ECO:0000255" key="3">
    <source>
        <dbReference type="HAMAP-Rule" id="MF_03003"/>
    </source>
</evidence>
<evidence type="ECO:0000256" key="4">
    <source>
        <dbReference type="SAM" id="MobiDB-lite"/>
    </source>
</evidence>
<keyword id="KW-0963">Cytoplasm</keyword>
<keyword id="KW-0396">Initiation factor</keyword>
<keyword id="KW-0597">Phosphoprotein</keyword>
<keyword id="KW-0648">Protein biosynthesis</keyword>
<keyword id="KW-1185">Reference proteome</keyword>
<keyword id="KW-0694">RNA-binding</keyword>
<proteinExistence type="inferred from homology"/>
<accession>B4LYI3</accession>
<reference key="1">
    <citation type="journal article" date="2007" name="Nature">
        <title>Evolution of genes and genomes on the Drosophila phylogeny.</title>
        <authorList>
            <consortium name="Drosophila 12 genomes consortium"/>
        </authorList>
    </citation>
    <scope>NUCLEOTIDE SEQUENCE [LARGE SCALE GENOMIC DNA]</scope>
    <source>
        <strain>Tucson 15010-1051.87</strain>
    </source>
</reference>
<feature type="chain" id="PRO_0000364160" description="Eukaryotic translation initiation factor 3 subunit D-1">
    <location>
        <begin position="1"/>
        <end position="563"/>
    </location>
</feature>
<feature type="region of interest" description="Disordered" evidence="4">
    <location>
        <begin position="98"/>
        <end position="167"/>
    </location>
</feature>
<feature type="region of interest" description="RNA gate" evidence="2">
    <location>
        <begin position="291"/>
        <end position="305"/>
    </location>
</feature>
<feature type="compositionally biased region" description="Basic residues" evidence="4">
    <location>
        <begin position="100"/>
        <end position="121"/>
    </location>
</feature>
<feature type="modified residue" description="Phosphothreonine" evidence="1">
    <location>
        <position position="128"/>
    </location>
</feature>
<name>EI3D1_DROVI</name>
<comment type="function">
    <text evidence="3">mRNA cap-binding component of the eukaryotic translation initiation factor 3 (eIF-3) complex, which is involved in protein synthesis of a specialized repertoire of mRNAs and, together with other initiation factors, stimulates binding of mRNA and methionyl-tRNAi to the 40S ribosome. The eIF-3 complex specifically targets and initiates translation of a subset of mRNAs involved in cell proliferation. In the eIF-3 complex, eif3d specifically recognizes and binds the 7-methylguanosine cap of a subset of mRNAs.</text>
</comment>
<comment type="subunit">
    <text evidence="3">Component of the eukaryotic translation initiation factor 3 (eIF-3) complex. The eIF-3 complex interacts with pix.</text>
</comment>
<comment type="subcellular location">
    <subcellularLocation>
        <location evidence="3">Cytoplasm</location>
    </subcellularLocation>
</comment>
<comment type="domain">
    <text evidence="3">The RNA gate region regulates mRNA cap recognition to prevent promiscuous mRNA-binding before assembly of eif3d into the full eukaryotic translation initiation factor 3 (eIF-3) complex.</text>
</comment>
<comment type="similarity">
    <text evidence="3">Belongs to the eIF-3 subunit D family.</text>
</comment>
<sequence length="563" mass="64084">MSETINTAAQFPTFEKPTVQFNEKGWGPCELPDTFKDVPYQPFSKNDRLGKICDWTSTSNNDKKYQNKYASTFGTGNQYAYYHEEDETTFHLVDTARVQKPPHQRGRFRNMRNSRSGRGRNARGGLNTHGHGMTTLSSKNVKARDPRRGMGKRFGNRGPPPKMRESSVAVRADWASIEEMDFPRLIKLSLPNIKDGEDITTCGTLEYYDKTYDRINVKNEKPLQKIDRIVHTVTTTDDPVIRRLSKTIGNVFATDAILATIMCSTRSNYSWDIVIEKVGEKIFMDKRDHTEFDLLTVNETSVEPPTDDDSSCNSPRNLAIEATFINHNFSQQVLKTGDQEAKYKFEETNPFISEDEDIQVASVGYRYKKWELGSDIVLVARCEHDGVLQTPSGEPQFLSIKALNEWDSKLANGVEWRQKLDTQRGAVLANELRNNACKLAKWTVQAVLAGSDQLKLGYVSRINPRDHSRHVILGTQQFKPHEFATQINLSMDNAWGILRCIIDLVMKQKDGKYLIMKDPNKPIIRLYDIPDNTFDSDDSDDGEGDDGEGFQQVYNYANNSNKI</sequence>
<dbReference type="EMBL" id="CH940650">
    <property type="protein sequence ID" value="EDW68003.1"/>
    <property type="molecule type" value="Genomic_DNA"/>
</dbReference>
<dbReference type="RefSeq" id="XP_002054483.1">
    <property type="nucleotide sequence ID" value="XM_002054447.4"/>
</dbReference>
<dbReference type="SMR" id="B4LYI3"/>
<dbReference type="FunCoup" id="B4LYI3">
    <property type="interactions" value="2755"/>
</dbReference>
<dbReference type="STRING" id="7244.B4LYI3"/>
<dbReference type="EnsemblMetazoa" id="FBtr0238707">
    <property type="protein sequence ID" value="FBpp0237199"/>
    <property type="gene ID" value="FBgn0209886"/>
</dbReference>
<dbReference type="EnsemblMetazoa" id="XM_002054447.3">
    <property type="protein sequence ID" value="XP_002054483.1"/>
    <property type="gene ID" value="LOC6630608"/>
</dbReference>
<dbReference type="GeneID" id="6630608"/>
<dbReference type="KEGG" id="dvi:6630608"/>
<dbReference type="CTD" id="42789"/>
<dbReference type="eggNOG" id="KOG2479">
    <property type="taxonomic scope" value="Eukaryota"/>
</dbReference>
<dbReference type="HOGENOM" id="CLU_024521_2_0_1"/>
<dbReference type="InParanoid" id="B4LYI3"/>
<dbReference type="OMA" id="FMDKRDN"/>
<dbReference type="OrthoDB" id="16538at2759"/>
<dbReference type="PhylomeDB" id="B4LYI3"/>
<dbReference type="ChiTaRS" id="eIF-3p66">
    <property type="organism name" value="fly"/>
</dbReference>
<dbReference type="Proteomes" id="UP000008792">
    <property type="component" value="Unassembled WGS sequence"/>
</dbReference>
<dbReference type="GO" id="GO:0016282">
    <property type="term" value="C:eukaryotic 43S preinitiation complex"/>
    <property type="evidence" value="ECO:0007669"/>
    <property type="project" value="UniProtKB-UniRule"/>
</dbReference>
<dbReference type="GO" id="GO:0033290">
    <property type="term" value="C:eukaryotic 48S preinitiation complex"/>
    <property type="evidence" value="ECO:0007669"/>
    <property type="project" value="UniProtKB-UniRule"/>
</dbReference>
<dbReference type="GO" id="GO:0005852">
    <property type="term" value="C:eukaryotic translation initiation factor 3 complex"/>
    <property type="evidence" value="ECO:0000250"/>
    <property type="project" value="UniProtKB"/>
</dbReference>
<dbReference type="GO" id="GO:0005634">
    <property type="term" value="C:nucleus"/>
    <property type="evidence" value="ECO:0007669"/>
    <property type="project" value="EnsemblMetazoa"/>
</dbReference>
<dbReference type="GO" id="GO:0098808">
    <property type="term" value="F:mRNA cap binding"/>
    <property type="evidence" value="ECO:0007669"/>
    <property type="project" value="UniProtKB-UniRule"/>
</dbReference>
<dbReference type="GO" id="GO:0003743">
    <property type="term" value="F:translation initiation factor activity"/>
    <property type="evidence" value="ECO:0000250"/>
    <property type="project" value="UniProtKB"/>
</dbReference>
<dbReference type="GO" id="GO:0002191">
    <property type="term" value="P:cap-dependent translational initiation"/>
    <property type="evidence" value="ECO:0007669"/>
    <property type="project" value="UniProtKB-UniRule"/>
</dbReference>
<dbReference type="GO" id="GO:0001732">
    <property type="term" value="P:formation of cytoplasmic translation initiation complex"/>
    <property type="evidence" value="ECO:0007669"/>
    <property type="project" value="UniProtKB-UniRule"/>
</dbReference>
<dbReference type="GO" id="GO:0006446">
    <property type="term" value="P:regulation of translational initiation"/>
    <property type="evidence" value="ECO:0000250"/>
    <property type="project" value="UniProtKB"/>
</dbReference>
<dbReference type="HAMAP" id="MF_03003">
    <property type="entry name" value="eIF3d"/>
    <property type="match status" value="1"/>
</dbReference>
<dbReference type="InterPro" id="IPR007783">
    <property type="entry name" value="eIF3d"/>
</dbReference>
<dbReference type="PANTHER" id="PTHR12399">
    <property type="entry name" value="EUKARYOTIC TRANSLATION INITIATION FACTOR 3 SUBUNIT 7"/>
    <property type="match status" value="1"/>
</dbReference>
<dbReference type="PANTHER" id="PTHR12399:SF0">
    <property type="entry name" value="EUKARYOTIC TRANSLATION INITIATION FACTOR 3 SUBUNIT D"/>
    <property type="match status" value="1"/>
</dbReference>
<dbReference type="Pfam" id="PF05091">
    <property type="entry name" value="eIF-3_zeta"/>
    <property type="match status" value="1"/>
</dbReference>
<dbReference type="PIRSF" id="PIRSF016281">
    <property type="entry name" value="EIF-3_zeta"/>
    <property type="match status" value="1"/>
</dbReference>